<geneLocation type="chloroplast"/>
<keyword id="KW-0007">Acetylation</keyword>
<keyword id="KW-0113">Calvin cycle</keyword>
<keyword id="KW-0120">Carbon dioxide fixation</keyword>
<keyword id="KW-0150">Chloroplast</keyword>
<keyword id="KW-0456">Lyase</keyword>
<keyword id="KW-0488">Methylation</keyword>
<keyword id="KW-0503">Monooxygenase</keyword>
<keyword id="KW-0560">Oxidoreductase</keyword>
<keyword id="KW-0601">Photorespiration</keyword>
<keyword id="KW-0602">Photosynthesis</keyword>
<keyword id="KW-0934">Plastid</keyword>
<evidence type="ECO:0000250" key="1"/>
<evidence type="ECO:0000305" key="2"/>
<feature type="propeptide" id="PRO_0000031217" evidence="1">
    <location>
        <begin position="1"/>
        <end position="2"/>
    </location>
</feature>
<feature type="chain" id="PRO_0000031218" description="Ribulose bisphosphate carboxylase large chain">
    <location>
        <begin position="3"/>
        <end position="58" status="greater than"/>
    </location>
</feature>
<feature type="modified residue" description="N-acetylproline" evidence="1">
    <location>
        <position position="3"/>
    </location>
</feature>
<feature type="modified residue" description="N6,N6,N6-trimethyllysine" evidence="1">
    <location>
        <position position="14"/>
    </location>
</feature>
<feature type="non-terminal residue">
    <location>
        <position position="58"/>
    </location>
</feature>
<proteinExistence type="inferred from homology"/>
<reference key="1">
    <citation type="journal article" date="1994" name="Mol. Phylogenet. Evol.">
        <title>Molecular phylogeny of families related to Celastrales based on rbcL 5' flanking sequences.</title>
        <authorList>
            <person name="Savolainen V."/>
            <person name="Manen J.F."/>
            <person name="Douzery E.J.P."/>
            <person name="Spichiger R."/>
        </authorList>
    </citation>
    <scope>NUCLEOTIDE SEQUENCE [GENOMIC DNA]</scope>
</reference>
<dbReference type="EC" id="4.1.1.39"/>
<dbReference type="EMBL" id="X69736">
    <property type="protein sequence ID" value="CAA49391.1"/>
    <property type="molecule type" value="Genomic_DNA"/>
</dbReference>
<dbReference type="PIR" id="S31549">
    <property type="entry name" value="S31549"/>
</dbReference>
<dbReference type="SMR" id="P69568"/>
<dbReference type="GO" id="GO:0009507">
    <property type="term" value="C:chloroplast"/>
    <property type="evidence" value="ECO:0007669"/>
    <property type="project" value="UniProtKB-SubCell"/>
</dbReference>
<dbReference type="GO" id="GO:0004497">
    <property type="term" value="F:monooxygenase activity"/>
    <property type="evidence" value="ECO:0007669"/>
    <property type="project" value="UniProtKB-KW"/>
</dbReference>
<dbReference type="GO" id="GO:0016984">
    <property type="term" value="F:ribulose-bisphosphate carboxylase activity"/>
    <property type="evidence" value="ECO:0007669"/>
    <property type="project" value="UniProtKB-EC"/>
</dbReference>
<dbReference type="GO" id="GO:0009853">
    <property type="term" value="P:photorespiration"/>
    <property type="evidence" value="ECO:0007669"/>
    <property type="project" value="UniProtKB-KW"/>
</dbReference>
<dbReference type="GO" id="GO:0019253">
    <property type="term" value="P:reductive pentose-phosphate cycle"/>
    <property type="evidence" value="ECO:0007669"/>
    <property type="project" value="UniProtKB-KW"/>
</dbReference>
<dbReference type="Gene3D" id="3.30.70.150">
    <property type="entry name" value="RuBisCO large subunit, N-terminal domain"/>
    <property type="match status" value="1"/>
</dbReference>
<dbReference type="InterPro" id="IPR033966">
    <property type="entry name" value="RuBisCO"/>
</dbReference>
<dbReference type="InterPro" id="IPR017443">
    <property type="entry name" value="RuBisCO_lsu_fd_N"/>
</dbReference>
<dbReference type="InterPro" id="IPR036422">
    <property type="entry name" value="RuBisCO_lsu_N_sf"/>
</dbReference>
<dbReference type="PANTHER" id="PTHR42704">
    <property type="entry name" value="RIBULOSE BISPHOSPHATE CARBOXYLASE"/>
    <property type="match status" value="1"/>
</dbReference>
<dbReference type="PANTHER" id="PTHR42704:SF15">
    <property type="entry name" value="RIBULOSE BISPHOSPHATE CARBOXYLASE LARGE CHAIN"/>
    <property type="match status" value="1"/>
</dbReference>
<dbReference type="Pfam" id="PF02788">
    <property type="entry name" value="RuBisCO_large_N"/>
    <property type="match status" value="1"/>
</dbReference>
<dbReference type="SUPFAM" id="SSF54966">
    <property type="entry name" value="RuBisCO, large subunit, small (N-terminal) domain"/>
    <property type="match status" value="1"/>
</dbReference>
<comment type="function">
    <text evidence="1">RuBisCO catalyzes two reactions: the carboxylation of D-ribulose 1,5-bisphosphate, the primary event in carbon dioxide fixation, as well as the oxidative fragmentation of the pentose substrate in the photorespiration process. Both reactions occur simultaneously and in competition at the same active site (By similarity).</text>
</comment>
<comment type="catalytic activity">
    <reaction>
        <text>2 (2R)-3-phosphoglycerate + 2 H(+) = D-ribulose 1,5-bisphosphate + CO2 + H2O</text>
        <dbReference type="Rhea" id="RHEA:23124"/>
        <dbReference type="ChEBI" id="CHEBI:15377"/>
        <dbReference type="ChEBI" id="CHEBI:15378"/>
        <dbReference type="ChEBI" id="CHEBI:16526"/>
        <dbReference type="ChEBI" id="CHEBI:57870"/>
        <dbReference type="ChEBI" id="CHEBI:58272"/>
        <dbReference type="EC" id="4.1.1.39"/>
    </reaction>
</comment>
<comment type="catalytic activity">
    <reaction>
        <text>D-ribulose 1,5-bisphosphate + O2 = 2-phosphoglycolate + (2R)-3-phosphoglycerate + 2 H(+)</text>
        <dbReference type="Rhea" id="RHEA:36631"/>
        <dbReference type="ChEBI" id="CHEBI:15378"/>
        <dbReference type="ChEBI" id="CHEBI:15379"/>
        <dbReference type="ChEBI" id="CHEBI:57870"/>
        <dbReference type="ChEBI" id="CHEBI:58033"/>
        <dbReference type="ChEBI" id="CHEBI:58272"/>
    </reaction>
</comment>
<comment type="subunit">
    <text evidence="1">Heterohexadecamer of 8 large chains and 8 small chains.</text>
</comment>
<comment type="subcellular location">
    <subcellularLocation>
        <location>Plastid</location>
        <location>Chloroplast</location>
    </subcellularLocation>
</comment>
<comment type="miscellaneous">
    <text evidence="1">The basic functional RuBisCO is composed of a large chain homodimer in a 'head-to-tail' conformation. In form I RuBisCO this homodimer is arranged in a barrel-like tetramer with the small subunits forming a tetrameric 'cap' on each end of the 'barrel' (By similarity).</text>
</comment>
<comment type="similarity">
    <text evidence="2">Belongs to the RuBisCO large chain family. Type I subfamily.</text>
</comment>
<name>RBL_EUPDU</name>
<sequence>MSPQTETKASVGFKAGVKDYKLTYYTPEYETKDTDILAAFRVTPQPGVPPEEAGAAVA</sequence>
<protein>
    <recommendedName>
        <fullName>Ribulose bisphosphate carboxylase large chain</fullName>
        <shortName>RuBisCO large subunit</shortName>
        <ecNumber>4.1.1.39</ecNumber>
    </recommendedName>
</protein>
<organism>
    <name type="scientific">Euphorbia dulcis</name>
    <name type="common">Sweet spurge</name>
    <dbReference type="NCBI Taxonomy" id="3992"/>
    <lineage>
        <taxon>Eukaryota</taxon>
        <taxon>Viridiplantae</taxon>
        <taxon>Streptophyta</taxon>
        <taxon>Embryophyta</taxon>
        <taxon>Tracheophyta</taxon>
        <taxon>Spermatophyta</taxon>
        <taxon>Magnoliopsida</taxon>
        <taxon>eudicotyledons</taxon>
        <taxon>Gunneridae</taxon>
        <taxon>Pentapetalae</taxon>
        <taxon>rosids</taxon>
        <taxon>fabids</taxon>
        <taxon>Malpighiales</taxon>
        <taxon>Euphorbiaceae</taxon>
        <taxon>Euphorbioideae</taxon>
        <taxon>Euphorbieae</taxon>
        <taxon>Euphorbia</taxon>
        <taxon>Euphorbia subgen. Esula</taxon>
        <taxon>Euphorbia sect. Helioscopia</taxon>
    </lineage>
</organism>
<gene>
    <name type="primary">rbcL</name>
</gene>
<accession>P69568</accession>
<accession>P31187</accession>